<proteinExistence type="inferred from homology"/>
<reference key="1">
    <citation type="journal article" date="2011" name="PLoS Genet.">
        <title>Genomic analysis of the necrotrophic fungal pathogens Sclerotinia sclerotiorum and Botrytis cinerea.</title>
        <authorList>
            <person name="Amselem J."/>
            <person name="Cuomo C.A."/>
            <person name="van Kan J.A.L."/>
            <person name="Viaud M."/>
            <person name="Benito E.P."/>
            <person name="Couloux A."/>
            <person name="Coutinho P.M."/>
            <person name="de Vries R.P."/>
            <person name="Dyer P.S."/>
            <person name="Fillinger S."/>
            <person name="Fournier E."/>
            <person name="Gout L."/>
            <person name="Hahn M."/>
            <person name="Kohn L."/>
            <person name="Lapalu N."/>
            <person name="Plummer K.M."/>
            <person name="Pradier J.-M."/>
            <person name="Quevillon E."/>
            <person name="Sharon A."/>
            <person name="Simon A."/>
            <person name="ten Have A."/>
            <person name="Tudzynski B."/>
            <person name="Tudzynski P."/>
            <person name="Wincker P."/>
            <person name="Andrew M."/>
            <person name="Anthouard V."/>
            <person name="Beever R.E."/>
            <person name="Beffa R."/>
            <person name="Benoit I."/>
            <person name="Bouzid O."/>
            <person name="Brault B."/>
            <person name="Chen Z."/>
            <person name="Choquer M."/>
            <person name="Collemare J."/>
            <person name="Cotton P."/>
            <person name="Danchin E.G."/>
            <person name="Da Silva C."/>
            <person name="Gautier A."/>
            <person name="Giraud C."/>
            <person name="Giraud T."/>
            <person name="Gonzalez C."/>
            <person name="Grossetete S."/>
            <person name="Gueldener U."/>
            <person name="Henrissat B."/>
            <person name="Howlett B.J."/>
            <person name="Kodira C."/>
            <person name="Kretschmer M."/>
            <person name="Lappartient A."/>
            <person name="Leroch M."/>
            <person name="Levis C."/>
            <person name="Mauceli E."/>
            <person name="Neuveglise C."/>
            <person name="Oeser B."/>
            <person name="Pearson M."/>
            <person name="Poulain J."/>
            <person name="Poussereau N."/>
            <person name="Quesneville H."/>
            <person name="Rascle C."/>
            <person name="Schumacher J."/>
            <person name="Segurens B."/>
            <person name="Sexton A."/>
            <person name="Silva E."/>
            <person name="Sirven C."/>
            <person name="Soanes D.M."/>
            <person name="Talbot N.J."/>
            <person name="Templeton M."/>
            <person name="Yandava C."/>
            <person name="Yarden O."/>
            <person name="Zeng Q."/>
            <person name="Rollins J.A."/>
            <person name="Lebrun M.-H."/>
            <person name="Dickman M."/>
        </authorList>
    </citation>
    <scope>NUCLEOTIDE SEQUENCE [LARGE SCALE GENOMIC DNA]</scope>
    <source>
        <strain>B05.10</strain>
    </source>
</reference>
<reference key="2">
    <citation type="journal article" date="2012" name="Eukaryot. Cell">
        <title>Genome update of Botrytis cinerea strains B05.10 and T4.</title>
        <authorList>
            <person name="Staats M."/>
            <person name="van Kan J.A.L."/>
        </authorList>
    </citation>
    <scope>NUCLEOTIDE SEQUENCE [LARGE SCALE GENOMIC DNA]</scope>
    <scope>GENOME REANNOTATION</scope>
    <source>
        <strain>B05.10</strain>
    </source>
</reference>
<reference key="3">
    <citation type="journal article" date="2017" name="Mol. Plant Pathol.">
        <title>A gapless genome sequence of the fungus Botrytis cinerea.</title>
        <authorList>
            <person name="van Kan J.A.L."/>
            <person name="Stassen J.H.M."/>
            <person name="Mosbach A."/>
            <person name="van der Lee T.A.J."/>
            <person name="Faino L."/>
            <person name="Farmer A.D."/>
            <person name="Papasotiriou D.G."/>
            <person name="Zhou S."/>
            <person name="Seidl M.F."/>
            <person name="Cottam E."/>
            <person name="Edel D."/>
            <person name="Hahn M."/>
            <person name="Schwartz D.C."/>
            <person name="Dietrich R.A."/>
            <person name="Widdison S."/>
            <person name="Scalliet G."/>
        </authorList>
    </citation>
    <scope>NUCLEOTIDE SEQUENCE [LARGE SCALE GENOMIC DNA]</scope>
    <scope>GENOME REANNOTATION</scope>
    <source>
        <strain>B05.10</strain>
    </source>
</reference>
<feature type="chain" id="PRO_0000324443" description="Stress response protein nst1">
    <location>
        <begin position="1"/>
        <end position="1218"/>
    </location>
</feature>
<feature type="region of interest" description="Disordered" evidence="3">
    <location>
        <begin position="1"/>
        <end position="237"/>
    </location>
</feature>
<feature type="region of interest" description="Disordered" evidence="3">
    <location>
        <begin position="306"/>
        <end position="391"/>
    </location>
</feature>
<feature type="region of interest" description="Disordered" evidence="3">
    <location>
        <begin position="431"/>
        <end position="508"/>
    </location>
</feature>
<feature type="region of interest" description="Disordered" evidence="3">
    <location>
        <begin position="544"/>
        <end position="745"/>
    </location>
</feature>
<feature type="region of interest" description="Disordered" evidence="3">
    <location>
        <begin position="765"/>
        <end position="810"/>
    </location>
</feature>
<feature type="region of interest" description="Disordered" evidence="3">
    <location>
        <begin position="911"/>
        <end position="1010"/>
    </location>
</feature>
<feature type="region of interest" description="Disordered" evidence="3">
    <location>
        <begin position="1018"/>
        <end position="1037"/>
    </location>
</feature>
<feature type="region of interest" description="Disordered" evidence="3">
    <location>
        <begin position="1190"/>
        <end position="1218"/>
    </location>
</feature>
<feature type="coiled-coil region" evidence="2">
    <location>
        <begin position="421"/>
        <end position="714"/>
    </location>
</feature>
<feature type="compositionally biased region" description="Polar residues" evidence="3">
    <location>
        <begin position="1"/>
        <end position="26"/>
    </location>
</feature>
<feature type="compositionally biased region" description="Low complexity" evidence="3">
    <location>
        <begin position="34"/>
        <end position="50"/>
    </location>
</feature>
<feature type="compositionally biased region" description="Polar residues" evidence="3">
    <location>
        <begin position="51"/>
        <end position="72"/>
    </location>
</feature>
<feature type="compositionally biased region" description="Basic residues" evidence="3">
    <location>
        <begin position="75"/>
        <end position="85"/>
    </location>
</feature>
<feature type="compositionally biased region" description="Low complexity" evidence="3">
    <location>
        <begin position="86"/>
        <end position="95"/>
    </location>
</feature>
<feature type="compositionally biased region" description="Basic and acidic residues" evidence="3">
    <location>
        <begin position="107"/>
        <end position="123"/>
    </location>
</feature>
<feature type="compositionally biased region" description="Acidic residues" evidence="3">
    <location>
        <begin position="124"/>
        <end position="149"/>
    </location>
</feature>
<feature type="compositionally biased region" description="Polar residues" evidence="3">
    <location>
        <begin position="159"/>
        <end position="171"/>
    </location>
</feature>
<feature type="compositionally biased region" description="Basic residues" evidence="3">
    <location>
        <begin position="174"/>
        <end position="183"/>
    </location>
</feature>
<feature type="compositionally biased region" description="Low complexity" evidence="3">
    <location>
        <begin position="206"/>
        <end position="216"/>
    </location>
</feature>
<feature type="compositionally biased region" description="Basic and acidic residues" evidence="3">
    <location>
        <begin position="224"/>
        <end position="237"/>
    </location>
</feature>
<feature type="compositionally biased region" description="Pro residues" evidence="3">
    <location>
        <begin position="313"/>
        <end position="322"/>
    </location>
</feature>
<feature type="compositionally biased region" description="Acidic residues" evidence="3">
    <location>
        <begin position="354"/>
        <end position="382"/>
    </location>
</feature>
<feature type="compositionally biased region" description="Basic and acidic residues" evidence="3">
    <location>
        <begin position="431"/>
        <end position="440"/>
    </location>
</feature>
<feature type="compositionally biased region" description="Acidic residues" evidence="3">
    <location>
        <begin position="470"/>
        <end position="501"/>
    </location>
</feature>
<feature type="compositionally biased region" description="Basic and acidic residues" evidence="3">
    <location>
        <begin position="544"/>
        <end position="715"/>
    </location>
</feature>
<feature type="compositionally biased region" description="Low complexity" evidence="3">
    <location>
        <begin position="716"/>
        <end position="730"/>
    </location>
</feature>
<feature type="compositionally biased region" description="Polar residues" evidence="3">
    <location>
        <begin position="769"/>
        <end position="796"/>
    </location>
</feature>
<feature type="compositionally biased region" description="Pro residues" evidence="3">
    <location>
        <begin position="799"/>
        <end position="810"/>
    </location>
</feature>
<feature type="compositionally biased region" description="Polar residues" evidence="3">
    <location>
        <begin position="940"/>
        <end position="963"/>
    </location>
</feature>
<name>NST1_BOTFB</name>
<dbReference type="EMBL" id="CP009815">
    <property type="protein sequence ID" value="ATZ55011.1"/>
    <property type="molecule type" value="Genomic_DNA"/>
</dbReference>
<dbReference type="RefSeq" id="XP_001556831.1">
    <property type="nucleotide sequence ID" value="XM_001556781.1"/>
</dbReference>
<dbReference type="SMR" id="A6RW62"/>
<dbReference type="EnsemblFungi" id="Bcin11g03190.1">
    <property type="protein sequence ID" value="Bcin11p03190.1"/>
    <property type="gene ID" value="Bcin11g03190"/>
</dbReference>
<dbReference type="GeneID" id="5437415"/>
<dbReference type="KEGG" id="bfu:BCIN_11g03190"/>
<dbReference type="VEuPathDB" id="FungiDB:Bcin11g03190"/>
<dbReference type="OrthoDB" id="21629at2759"/>
<dbReference type="Proteomes" id="UP000001798">
    <property type="component" value="Chromosome bcin11"/>
</dbReference>
<dbReference type="GO" id="GO:0005737">
    <property type="term" value="C:cytoplasm"/>
    <property type="evidence" value="ECO:0007669"/>
    <property type="project" value="UniProtKB-SubCell"/>
</dbReference>
<dbReference type="CDD" id="cd06503">
    <property type="entry name" value="ATP-synt_Fo_b"/>
    <property type="match status" value="1"/>
</dbReference>
<dbReference type="InterPro" id="IPR051195">
    <property type="entry name" value="Fungal_stress_NST1"/>
</dbReference>
<dbReference type="InterPro" id="IPR025279">
    <property type="entry name" value="NST1"/>
</dbReference>
<dbReference type="PANTHER" id="PTHR31780:SF10">
    <property type="entry name" value="LD36051P"/>
    <property type="match status" value="1"/>
</dbReference>
<dbReference type="PANTHER" id="PTHR31780">
    <property type="entry name" value="STRESS RESPONSE PROTEIN NST1-RELATED"/>
    <property type="match status" value="1"/>
</dbReference>
<dbReference type="Pfam" id="PF13945">
    <property type="entry name" value="NST1"/>
    <property type="match status" value="1"/>
</dbReference>
<sequence>MPANQRKNTSQSSYLQTPRNIATPLTKNAGKIVTTPKKSSTSDSSETSPTMAQTTTKSNGQLPTPPTNNGAPTVNRKKQKRRAKQAARAAAEQAQGSQMSGGPTSGDVKRQMQELEARFRETGLDEQYDDDEQFDPADENAYYSDEEGDAYSGSYGHDGSSTNGYAIPTTNSSKKQKKKKKSKSSQSDHSNHANHGPNGSSHNHVSLPLPLQSPPSMQRGPGISKEKIWNTSSQEERERIKEFWLSLGEDERKSLVKVEKDAVLKKMKEQQKHSCSCTVCGRKRTAIEEELEVLYDAYYEELEQYANHQGGDGPPPMMPPPRRFGAMSGLQPPNRLPPVFNGQQPSRGRIVEQLGDDEDEEGDEEYSEDDGDEDDFSEEEPEEIPRSHATDFFNFGNSLTVQGGILTVADDLLKNDGKKFIEMMEQLAERRMAREEDAKEQYANANYGHPSNGSMHPHSHGHVHNHPPPPEEDEYDDEEDDEDEYDSQEEDYDEEEMDSMTEEQRMEEGRRMFQIFAARMFEQRVLTAYKEKVAKERQQKLLEELEEESRADSQKKAKRAKDAQKKKEKLLEKKRAMAEEKARKDAEKAAEEASLREIEEKKAEAQRLKREENRKKKEAQKKADEEERVRKESEKQRRLQEQRERQAEQERKQREAKERERKEKEELRRQALEAKEIKEKEAKERKEKHEREKREKEAKVKADKEARELQKREELSAQQAAVQAAQSAAHVSRRANQVPTPKLSHALASPHIPVAIPAVPKAPTPIKLRTNSQQDNYSIPRTPSSKYQSISPNSVTPLPNSPGPIGPPGKTPIQHPLLQHPQATSPIHSALKGPPGIPQSPYAGMQPMPGGFQPGMPMVPPGFGRPHHDPMFGLQQGIGSQFRPLQIPNGGIPPFQPGFNIHHMPQGRGFPMHGPPGFPQHSPNGMGSIGQLFGAPKETPPSQTHSRNQSGSFDGLSSATQAQPIARPTPIGRPSSIVHGTRHSDNFNSGESDETSKHLGSSALLDDTDEPINIGVGARRSSAAPGNPGRQNFLPPPFGMDRSDPASMMSSFNTWGAPPNPFGSSSLPGSNGFGGGWNTSLNMNGSFGMTNYYHSQPRSVAVRLRICGACQNLQNSTQDGWLDIDAIKNEIALSTTVREEPLSERELLDICDTEGNPMNGGGTFEIRSSDGKSQIHFVSDSMSHDFRSAGAPGEIGSPISGGASRNLGPPGRAPIGGF</sequence>
<accession>A6RW62</accession>
<accession>A0A384JWV0</accession>
<gene>
    <name type="primary">nst1</name>
    <name type="ORF">BC1G_04849</name>
    <name type="ORF">BCIN_11g03190</name>
</gene>
<organism>
    <name type="scientific">Botryotinia fuckeliana (strain B05.10)</name>
    <name type="common">Noble rot fungus</name>
    <name type="synonym">Botrytis cinerea</name>
    <dbReference type="NCBI Taxonomy" id="332648"/>
    <lineage>
        <taxon>Eukaryota</taxon>
        <taxon>Fungi</taxon>
        <taxon>Dikarya</taxon>
        <taxon>Ascomycota</taxon>
        <taxon>Pezizomycotina</taxon>
        <taxon>Leotiomycetes</taxon>
        <taxon>Helotiales</taxon>
        <taxon>Sclerotiniaceae</taxon>
        <taxon>Botrytis</taxon>
    </lineage>
</organism>
<keyword id="KW-0175">Coiled coil</keyword>
<keyword id="KW-0963">Cytoplasm</keyword>
<keyword id="KW-1185">Reference proteome</keyword>
<keyword id="KW-0346">Stress response</keyword>
<comment type="function">
    <text evidence="1">May act as a negative regulator of salt tolerance.</text>
</comment>
<comment type="subcellular location">
    <subcellularLocation>
        <location evidence="1">Cytoplasm</location>
    </subcellularLocation>
</comment>
<comment type="similarity">
    <text evidence="4">Belongs to the NST1 family.</text>
</comment>
<protein>
    <recommendedName>
        <fullName>Stress response protein nst1</fullName>
    </recommendedName>
</protein>
<evidence type="ECO:0000250" key="1"/>
<evidence type="ECO:0000255" key="2"/>
<evidence type="ECO:0000256" key="3">
    <source>
        <dbReference type="SAM" id="MobiDB-lite"/>
    </source>
</evidence>
<evidence type="ECO:0000305" key="4"/>